<sequence length="271" mass="30664">MVTMKDLLECGVHFGHQTRRWNPKMKKYIFGVRKNIHIIDLQKTLRYFRYTYNVVRDAAAEGKTVMFVGTKKQASETIKQYADTINAPYVNYRWLGGMLTNFSTIKKSIRKLEVIEEMEASGQIELLTKKEKLMLTRKKEKLEKYLGGVRHMKKAPDMLFVVDAAKEKIAVAEARRLGIPVVAPLDTNCDPDVVDFPIPGNDDAIRSIQLFCKEMAEAIQEGRALAGSEEGEATEEVTPASEAEKQEVLAEAMSEEGDALQESEVVEEEEK</sequence>
<protein>
    <recommendedName>
        <fullName evidence="1">Small ribosomal subunit protein uS2</fullName>
    </recommendedName>
    <alternativeName>
        <fullName evidence="3">30S ribosomal protein S2</fullName>
    </alternativeName>
</protein>
<accession>Q7MAK0</accession>
<proteinExistence type="inferred from homology"/>
<evidence type="ECO:0000255" key="1">
    <source>
        <dbReference type="HAMAP-Rule" id="MF_00291"/>
    </source>
</evidence>
<evidence type="ECO:0000256" key="2">
    <source>
        <dbReference type="SAM" id="MobiDB-lite"/>
    </source>
</evidence>
<evidence type="ECO:0000305" key="3"/>
<dbReference type="EMBL" id="BX571657">
    <property type="protein sequence ID" value="CAE09355.1"/>
    <property type="molecule type" value="Genomic_DNA"/>
</dbReference>
<dbReference type="RefSeq" id="WP_041571957.1">
    <property type="nucleotide sequence ID" value="NC_005090.1"/>
</dbReference>
<dbReference type="SMR" id="Q7MAK0"/>
<dbReference type="STRING" id="273121.WS0194"/>
<dbReference type="KEGG" id="wsu:WS0194"/>
<dbReference type="eggNOG" id="COG0052">
    <property type="taxonomic scope" value="Bacteria"/>
</dbReference>
<dbReference type="HOGENOM" id="CLU_040318_1_2_7"/>
<dbReference type="Proteomes" id="UP000000422">
    <property type="component" value="Chromosome"/>
</dbReference>
<dbReference type="GO" id="GO:0022627">
    <property type="term" value="C:cytosolic small ribosomal subunit"/>
    <property type="evidence" value="ECO:0007669"/>
    <property type="project" value="TreeGrafter"/>
</dbReference>
<dbReference type="GO" id="GO:0003735">
    <property type="term" value="F:structural constituent of ribosome"/>
    <property type="evidence" value="ECO:0007669"/>
    <property type="project" value="InterPro"/>
</dbReference>
<dbReference type="GO" id="GO:0006412">
    <property type="term" value="P:translation"/>
    <property type="evidence" value="ECO:0007669"/>
    <property type="project" value="UniProtKB-UniRule"/>
</dbReference>
<dbReference type="CDD" id="cd01425">
    <property type="entry name" value="RPS2"/>
    <property type="match status" value="1"/>
</dbReference>
<dbReference type="FunFam" id="1.10.287.610:FF:000001">
    <property type="entry name" value="30S ribosomal protein S2"/>
    <property type="match status" value="1"/>
</dbReference>
<dbReference type="Gene3D" id="3.40.50.10490">
    <property type="entry name" value="Glucose-6-phosphate isomerase like protein, domain 1"/>
    <property type="match status" value="1"/>
</dbReference>
<dbReference type="Gene3D" id="1.10.287.610">
    <property type="entry name" value="Helix hairpin bin"/>
    <property type="match status" value="1"/>
</dbReference>
<dbReference type="HAMAP" id="MF_00291_B">
    <property type="entry name" value="Ribosomal_uS2_B"/>
    <property type="match status" value="1"/>
</dbReference>
<dbReference type="InterPro" id="IPR001865">
    <property type="entry name" value="Ribosomal_uS2"/>
</dbReference>
<dbReference type="InterPro" id="IPR005706">
    <property type="entry name" value="Ribosomal_uS2_bac/mit/plastid"/>
</dbReference>
<dbReference type="InterPro" id="IPR018130">
    <property type="entry name" value="Ribosomal_uS2_CS"/>
</dbReference>
<dbReference type="InterPro" id="IPR023591">
    <property type="entry name" value="Ribosomal_uS2_flav_dom_sf"/>
</dbReference>
<dbReference type="NCBIfam" id="TIGR01011">
    <property type="entry name" value="rpsB_bact"/>
    <property type="match status" value="1"/>
</dbReference>
<dbReference type="PANTHER" id="PTHR12534">
    <property type="entry name" value="30S RIBOSOMAL PROTEIN S2 PROKARYOTIC AND ORGANELLAR"/>
    <property type="match status" value="1"/>
</dbReference>
<dbReference type="PANTHER" id="PTHR12534:SF0">
    <property type="entry name" value="SMALL RIBOSOMAL SUBUNIT PROTEIN US2M"/>
    <property type="match status" value="1"/>
</dbReference>
<dbReference type="Pfam" id="PF00318">
    <property type="entry name" value="Ribosomal_S2"/>
    <property type="match status" value="1"/>
</dbReference>
<dbReference type="PRINTS" id="PR00395">
    <property type="entry name" value="RIBOSOMALS2"/>
</dbReference>
<dbReference type="SUPFAM" id="SSF52313">
    <property type="entry name" value="Ribosomal protein S2"/>
    <property type="match status" value="1"/>
</dbReference>
<dbReference type="PROSITE" id="PS00962">
    <property type="entry name" value="RIBOSOMAL_S2_1"/>
    <property type="match status" value="1"/>
</dbReference>
<dbReference type="PROSITE" id="PS00963">
    <property type="entry name" value="RIBOSOMAL_S2_2"/>
    <property type="match status" value="1"/>
</dbReference>
<name>RS2_WOLSU</name>
<comment type="similarity">
    <text evidence="1">Belongs to the universal ribosomal protein uS2 family.</text>
</comment>
<reference key="1">
    <citation type="journal article" date="2003" name="Proc. Natl. Acad. Sci. U.S.A.">
        <title>Complete genome sequence and analysis of Wolinella succinogenes.</title>
        <authorList>
            <person name="Baar C."/>
            <person name="Eppinger M."/>
            <person name="Raddatz G."/>
            <person name="Simon J."/>
            <person name="Lanz C."/>
            <person name="Klimmek O."/>
            <person name="Nandakumar R."/>
            <person name="Gross R."/>
            <person name="Rosinus A."/>
            <person name="Keller H."/>
            <person name="Jagtap P."/>
            <person name="Linke B."/>
            <person name="Meyer F."/>
            <person name="Lederer H."/>
            <person name="Schuster S.C."/>
        </authorList>
    </citation>
    <scope>NUCLEOTIDE SEQUENCE [LARGE SCALE GENOMIC DNA]</scope>
    <source>
        <strain>ATCC 29543 / DSM 1740 / CCUG 13145 / JCM 31913 / LMG 7466 / NCTC 11488 / FDC 602W</strain>
    </source>
</reference>
<keyword id="KW-1185">Reference proteome</keyword>
<keyword id="KW-0687">Ribonucleoprotein</keyword>
<keyword id="KW-0689">Ribosomal protein</keyword>
<gene>
    <name evidence="1" type="primary">rpsB</name>
    <name type="ordered locus">WS0194</name>
</gene>
<feature type="chain" id="PRO_0000134277" description="Small ribosomal subunit protein uS2">
    <location>
        <begin position="1"/>
        <end position="271"/>
    </location>
</feature>
<feature type="region of interest" description="Disordered" evidence="2">
    <location>
        <begin position="223"/>
        <end position="271"/>
    </location>
</feature>
<feature type="compositionally biased region" description="Acidic residues" evidence="2">
    <location>
        <begin position="253"/>
        <end position="271"/>
    </location>
</feature>
<organism>
    <name type="scientific">Wolinella succinogenes (strain ATCC 29543 / DSM 1740 / CCUG 13145 / JCM 31913 / LMG 7466 / NCTC 11488 / FDC 602W)</name>
    <name type="common">Vibrio succinogenes</name>
    <dbReference type="NCBI Taxonomy" id="273121"/>
    <lineage>
        <taxon>Bacteria</taxon>
        <taxon>Pseudomonadati</taxon>
        <taxon>Campylobacterota</taxon>
        <taxon>Epsilonproteobacteria</taxon>
        <taxon>Campylobacterales</taxon>
        <taxon>Helicobacteraceae</taxon>
        <taxon>Wolinella</taxon>
    </lineage>
</organism>